<gene>
    <name type="primary">Rps20</name>
</gene>
<comment type="function">
    <text evidence="1">Component of the small ribosomal subunit. The ribosome is a large ribonucleoprotein complex responsible for the synthesis of proteins in the cell.</text>
</comment>
<comment type="subunit">
    <text evidence="1">Component of the 40S small ribosomal subunit.</text>
</comment>
<comment type="subcellular location">
    <subcellularLocation>
        <location evidence="1">Cytoplasm</location>
    </subcellularLocation>
</comment>
<comment type="PTM">
    <text evidence="1">Polyubiquitinated by ZNF598 via 'Lys-63'-linked ubiquitin chains when a ribosome has stalled, initiating the ribosome quality control (RQC) pathway to degrade the potentially detrimental aberrant nascent polypeptide. Deubiquitinated by OTUD3 and USP21, antagonizing ZNF598 activity.</text>
</comment>
<comment type="PTM">
    <text evidence="2">Ufmylated by UFL1.</text>
</comment>
<comment type="similarity">
    <text evidence="3">Belongs to the universal ribosomal protein uS10 family.</text>
</comment>
<feature type="initiator methionine" description="Removed" evidence="1">
    <location>
        <position position="1"/>
    </location>
</feature>
<feature type="chain" id="PRO_0000146685" description="Small ribosomal subunit protein uS10">
    <location>
        <begin position="2"/>
        <end position="119"/>
    </location>
</feature>
<feature type="modified residue" description="N-acetylalanine" evidence="1">
    <location>
        <position position="2"/>
    </location>
</feature>
<feature type="modified residue" description="N6-succinyllysine; alternate" evidence="2">
    <location>
        <position position="8"/>
    </location>
</feature>
<feature type="modified residue" description="Phosphothreonine" evidence="1">
    <location>
        <position position="9"/>
    </location>
</feature>
<feature type="modified residue" description="N6-acetyllysine" evidence="2">
    <location>
        <position position="34"/>
    </location>
</feature>
<feature type="modified residue" description="N6-acetyllysine" evidence="2">
    <location>
        <position position="75"/>
    </location>
</feature>
<feature type="modified residue" description="Phosphoserine" evidence="1">
    <location>
        <position position="93"/>
    </location>
</feature>
<feature type="cross-link" description="Glycyl lysine isopeptide (Lys-Gly) (interchain with G-Cter in ubiquitin)" evidence="1">
    <location>
        <position position="4"/>
    </location>
</feature>
<feature type="cross-link" description="Glycyl lysine isopeptide (Lys-Gly) (interchain with G-Cter in ubiquitin); alternate" evidence="1">
    <location>
        <position position="8"/>
    </location>
</feature>
<accession>P60868</accession>
<accession>P17075</accession>
<proteinExistence type="evidence at protein level"/>
<keyword id="KW-0002">3D-structure</keyword>
<keyword id="KW-0007">Acetylation</keyword>
<keyword id="KW-0963">Cytoplasm</keyword>
<keyword id="KW-1017">Isopeptide bond</keyword>
<keyword id="KW-0597">Phosphoprotein</keyword>
<keyword id="KW-1185">Reference proteome</keyword>
<keyword id="KW-0687">Ribonucleoprotein</keyword>
<keyword id="KW-0689">Ribosomal protein</keyword>
<keyword id="KW-0832">Ubl conjugation</keyword>
<evidence type="ECO:0000250" key="1">
    <source>
        <dbReference type="UniProtKB" id="P60866"/>
    </source>
</evidence>
<evidence type="ECO:0000250" key="2">
    <source>
        <dbReference type="UniProtKB" id="P60867"/>
    </source>
</evidence>
<evidence type="ECO:0000305" key="3"/>
<reference key="1">
    <citation type="journal article" date="1990" name="Biochim. Biophys. Acta">
        <title>The primary structure of rat ribosomal protein S20.</title>
        <authorList>
            <person name="Chan Y.-L."/>
            <person name="Wool I.G."/>
        </authorList>
    </citation>
    <scope>NUCLEOTIDE SEQUENCE [MRNA]</scope>
    <source>
        <strain>Sprague-Dawley</strain>
        <tissue>Liver</tissue>
    </source>
</reference>
<reference key="2">
    <citation type="journal article" date="2004" name="Genome Res.">
        <title>The status, quality, and expansion of the NIH full-length cDNA project: the Mammalian Gene Collection (MGC).</title>
        <authorList>
            <consortium name="The MGC Project Team"/>
        </authorList>
    </citation>
    <scope>NUCLEOTIDE SEQUENCE [LARGE SCALE MRNA]</scope>
    <source>
        <tissue>Pituitary</tissue>
    </source>
</reference>
<sequence>MAFKDTGKTPVEPEVAIHRIRITLTSRNVKSLEKVCADLIRGAKEKNLKVKGPVRMPTKTLRITTRKTPCGEGSKTWDRFQMRIHKRLIDLHSPSEIVKQITSISIEPGVEVEVTIADA</sequence>
<protein>
    <recommendedName>
        <fullName evidence="3">Small ribosomal subunit protein uS10</fullName>
    </recommendedName>
    <alternativeName>
        <fullName>40S ribosomal protein S20</fullName>
    </alternativeName>
</protein>
<dbReference type="EMBL" id="X51537">
    <property type="protein sequence ID" value="CAA35917.1"/>
    <property type="molecule type" value="mRNA"/>
</dbReference>
<dbReference type="EMBL" id="BC058496">
    <property type="protein sequence ID" value="AAH58496.1"/>
    <property type="molecule type" value="mRNA"/>
</dbReference>
<dbReference type="PIR" id="S14682">
    <property type="entry name" value="R3RT20"/>
</dbReference>
<dbReference type="RefSeq" id="NP_001007604.1">
    <property type="nucleotide sequence ID" value="NM_001007603.4"/>
</dbReference>
<dbReference type="RefSeq" id="XP_002726693.1">
    <property type="nucleotide sequence ID" value="XM_002726647.4"/>
</dbReference>
<dbReference type="RefSeq" id="XP_002727194.1">
    <property type="nucleotide sequence ID" value="XM_002727148.5"/>
</dbReference>
<dbReference type="RefSeq" id="XP_002729204.1">
    <property type="nucleotide sequence ID" value="XM_002729158.5"/>
</dbReference>
<dbReference type="RefSeq" id="XP_002729620.1">
    <property type="nucleotide sequence ID" value="XM_002729574.4"/>
</dbReference>
<dbReference type="RefSeq" id="XP_002730040.1">
    <property type="nucleotide sequence ID" value="XM_002729994.5"/>
</dbReference>
<dbReference type="RefSeq" id="XP_003753765.1">
    <property type="nucleotide sequence ID" value="XM_003753717.4"/>
</dbReference>
<dbReference type="PDB" id="7QGG">
    <property type="method" value="EM"/>
    <property type="resolution" value="2.86 A"/>
    <property type="chains" value="SU=1-119"/>
</dbReference>
<dbReference type="PDB" id="7QVP">
    <property type="method" value="EM"/>
    <property type="resolution" value="3.00 A"/>
    <property type="chains" value="RU/SU=1-119"/>
</dbReference>
<dbReference type="PDBsum" id="7QGG"/>
<dbReference type="PDBsum" id="7QVP"/>
<dbReference type="EMDB" id="EMD-13954"/>
<dbReference type="EMDB" id="EMD-14181"/>
<dbReference type="SMR" id="P60868"/>
<dbReference type="BioGRID" id="250778">
    <property type="interactions" value="8"/>
</dbReference>
<dbReference type="FunCoup" id="P60868">
    <property type="interactions" value="1927"/>
</dbReference>
<dbReference type="IntAct" id="P60868">
    <property type="interactions" value="5"/>
</dbReference>
<dbReference type="MINT" id="P60868"/>
<dbReference type="STRING" id="10116.ENSRNOP00000065886"/>
<dbReference type="iPTMnet" id="P60868"/>
<dbReference type="PhosphoSitePlus" id="P60868"/>
<dbReference type="jPOST" id="P60868"/>
<dbReference type="PaxDb" id="10116-ENSRNOP00000011314"/>
<dbReference type="Ensembl" id="ENSRNOT00000011314.8">
    <property type="protein sequence ID" value="ENSRNOP00000011314.7"/>
    <property type="gene ID" value="ENSRNOG00000008555.8"/>
</dbReference>
<dbReference type="Ensembl" id="ENSRNOT00000040481.6">
    <property type="protein sequence ID" value="ENSRNOP00000066077.1"/>
    <property type="gene ID" value="ENSRNOG00000071148.1"/>
</dbReference>
<dbReference type="Ensembl" id="ENSRNOT00000041813.6">
    <property type="protein sequence ID" value="ENSRNOP00000065886.1"/>
    <property type="gene ID" value="ENSRNOG00000029627.6"/>
</dbReference>
<dbReference type="Ensembl" id="ENSRNOT00000051449.5">
    <property type="protein sequence ID" value="ENSRNOP00000069127.1"/>
    <property type="gene ID" value="ENSRNOG00000030345.5"/>
</dbReference>
<dbReference type="GeneID" id="122772"/>
<dbReference type="KEGG" id="rno:122772"/>
<dbReference type="UCSC" id="RGD:621037">
    <property type="organism name" value="rat"/>
</dbReference>
<dbReference type="AGR" id="RGD:621037"/>
<dbReference type="CTD" id="6224"/>
<dbReference type="RGD" id="621037">
    <property type="gene designation" value="Rps20"/>
</dbReference>
<dbReference type="eggNOG" id="KOG0900">
    <property type="taxonomic scope" value="Eukaryota"/>
</dbReference>
<dbReference type="GeneTree" id="ENSGT00390000003248"/>
<dbReference type="HOGENOM" id="CLU_122625_0_0_1"/>
<dbReference type="InParanoid" id="P60868"/>
<dbReference type="OMA" id="MAYPMKP"/>
<dbReference type="OrthoDB" id="9612047at2759"/>
<dbReference type="PhylomeDB" id="P60868"/>
<dbReference type="TreeFam" id="TF300222"/>
<dbReference type="Reactome" id="R-RNO-156827">
    <property type="pathway name" value="L13a-mediated translational silencing of Ceruloplasmin expression"/>
</dbReference>
<dbReference type="Reactome" id="R-RNO-1799339">
    <property type="pathway name" value="SRP-dependent cotranslational protein targeting to membrane"/>
</dbReference>
<dbReference type="Reactome" id="R-RNO-6791226">
    <property type="pathway name" value="Major pathway of rRNA processing in the nucleolus and cytosol"/>
</dbReference>
<dbReference type="Reactome" id="R-RNO-72649">
    <property type="pathway name" value="Translation initiation complex formation"/>
</dbReference>
<dbReference type="Reactome" id="R-RNO-72689">
    <property type="pathway name" value="Formation of a pool of free 40S subunits"/>
</dbReference>
<dbReference type="Reactome" id="R-RNO-72695">
    <property type="pathway name" value="Formation of the ternary complex, and subsequently, the 43S complex"/>
</dbReference>
<dbReference type="Reactome" id="R-RNO-72702">
    <property type="pathway name" value="Ribosomal scanning and start codon recognition"/>
</dbReference>
<dbReference type="Reactome" id="R-RNO-72706">
    <property type="pathway name" value="GTP hydrolysis and joining of the 60S ribosomal subunit"/>
</dbReference>
<dbReference type="Reactome" id="R-RNO-975956">
    <property type="pathway name" value="Nonsense Mediated Decay (NMD) independent of the Exon Junction Complex (EJC)"/>
</dbReference>
<dbReference type="Reactome" id="R-RNO-975957">
    <property type="pathway name" value="Nonsense Mediated Decay (NMD) enhanced by the Exon Junction Complex (EJC)"/>
</dbReference>
<dbReference type="PRO" id="PR:P60868"/>
<dbReference type="Proteomes" id="UP000002494">
    <property type="component" value="Chromosome 3"/>
</dbReference>
<dbReference type="Proteomes" id="UP000002494">
    <property type="component" value="Chromosome 5"/>
</dbReference>
<dbReference type="Proteomes" id="UP000002494">
    <property type="component" value="Chromosome 9"/>
</dbReference>
<dbReference type="Bgee" id="ENSRNOG00000029627">
    <property type="expression patterns" value="Expressed in thymus and 19 other cell types or tissues"/>
</dbReference>
<dbReference type="GO" id="GO:0098556">
    <property type="term" value="C:cytoplasmic side of rough endoplasmic reticulum membrane"/>
    <property type="evidence" value="ECO:0000266"/>
    <property type="project" value="RGD"/>
</dbReference>
<dbReference type="GO" id="GO:0022626">
    <property type="term" value="C:cytosolic ribosome"/>
    <property type="evidence" value="ECO:0000266"/>
    <property type="project" value="RGD"/>
</dbReference>
<dbReference type="GO" id="GO:0022627">
    <property type="term" value="C:cytosolic small ribosomal subunit"/>
    <property type="evidence" value="ECO:0000314"/>
    <property type="project" value="RGD"/>
</dbReference>
<dbReference type="GO" id="GO:0045202">
    <property type="term" value="C:synapse"/>
    <property type="evidence" value="ECO:0000266"/>
    <property type="project" value="RGD"/>
</dbReference>
<dbReference type="GO" id="GO:0097371">
    <property type="term" value="F:MDM2/MDM4 family protein binding"/>
    <property type="evidence" value="ECO:0000266"/>
    <property type="project" value="RGD"/>
</dbReference>
<dbReference type="GO" id="GO:0003723">
    <property type="term" value="F:RNA binding"/>
    <property type="evidence" value="ECO:0007669"/>
    <property type="project" value="InterPro"/>
</dbReference>
<dbReference type="GO" id="GO:0003735">
    <property type="term" value="F:structural constituent of ribosome"/>
    <property type="evidence" value="ECO:0000266"/>
    <property type="project" value="RGD"/>
</dbReference>
<dbReference type="GO" id="GO:1990948">
    <property type="term" value="F:ubiquitin ligase inhibitor activity"/>
    <property type="evidence" value="ECO:0000266"/>
    <property type="project" value="RGD"/>
</dbReference>
<dbReference type="GO" id="GO:1901798">
    <property type="term" value="P:positive regulation of signal transduction by p53 class mediator"/>
    <property type="evidence" value="ECO:0000266"/>
    <property type="project" value="RGD"/>
</dbReference>
<dbReference type="GO" id="GO:0006412">
    <property type="term" value="P:translation"/>
    <property type="evidence" value="ECO:0007669"/>
    <property type="project" value="InterPro"/>
</dbReference>
<dbReference type="FunFam" id="3.30.70.600:FF:000011">
    <property type="entry name" value="Uncharacterized protein"/>
    <property type="match status" value="1"/>
</dbReference>
<dbReference type="Gene3D" id="3.30.70.600">
    <property type="entry name" value="Ribosomal protein S10 domain"/>
    <property type="match status" value="1"/>
</dbReference>
<dbReference type="HAMAP" id="MF_00508">
    <property type="entry name" value="Ribosomal_uS10"/>
    <property type="match status" value="1"/>
</dbReference>
<dbReference type="InterPro" id="IPR001848">
    <property type="entry name" value="Ribosomal_uS10"/>
</dbReference>
<dbReference type="InterPro" id="IPR018268">
    <property type="entry name" value="Ribosomal_uS10_CS"/>
</dbReference>
<dbReference type="InterPro" id="IPR027486">
    <property type="entry name" value="Ribosomal_uS10_dom"/>
</dbReference>
<dbReference type="InterPro" id="IPR036838">
    <property type="entry name" value="Ribosomal_uS10_dom_sf"/>
</dbReference>
<dbReference type="InterPro" id="IPR005729">
    <property type="entry name" value="Ribosomal_uS10_euk/arc"/>
</dbReference>
<dbReference type="NCBIfam" id="TIGR01046">
    <property type="entry name" value="uS10_euk_arch"/>
    <property type="match status" value="1"/>
</dbReference>
<dbReference type="PANTHER" id="PTHR11700">
    <property type="entry name" value="30S RIBOSOMAL PROTEIN S10 FAMILY MEMBER"/>
    <property type="match status" value="1"/>
</dbReference>
<dbReference type="Pfam" id="PF00338">
    <property type="entry name" value="Ribosomal_S10"/>
    <property type="match status" value="1"/>
</dbReference>
<dbReference type="PRINTS" id="PR00971">
    <property type="entry name" value="RIBOSOMALS10"/>
</dbReference>
<dbReference type="SMART" id="SM01403">
    <property type="entry name" value="Ribosomal_S10"/>
    <property type="match status" value="1"/>
</dbReference>
<dbReference type="SUPFAM" id="SSF54999">
    <property type="entry name" value="Ribosomal protein S10"/>
    <property type="match status" value="1"/>
</dbReference>
<dbReference type="PROSITE" id="PS00361">
    <property type="entry name" value="RIBOSOMAL_S10"/>
    <property type="match status" value="1"/>
</dbReference>
<name>RS20_RAT</name>
<organism>
    <name type="scientific">Rattus norvegicus</name>
    <name type="common">Rat</name>
    <dbReference type="NCBI Taxonomy" id="10116"/>
    <lineage>
        <taxon>Eukaryota</taxon>
        <taxon>Metazoa</taxon>
        <taxon>Chordata</taxon>
        <taxon>Craniata</taxon>
        <taxon>Vertebrata</taxon>
        <taxon>Euteleostomi</taxon>
        <taxon>Mammalia</taxon>
        <taxon>Eutheria</taxon>
        <taxon>Euarchontoglires</taxon>
        <taxon>Glires</taxon>
        <taxon>Rodentia</taxon>
        <taxon>Myomorpha</taxon>
        <taxon>Muroidea</taxon>
        <taxon>Muridae</taxon>
        <taxon>Murinae</taxon>
        <taxon>Rattus</taxon>
    </lineage>
</organism>